<keyword id="KW-0378">Hydrolase</keyword>
<keyword id="KW-1185">Reference proteome</keyword>
<evidence type="ECO:0000255" key="1">
    <source>
        <dbReference type="HAMAP-Rule" id="MF_00298"/>
    </source>
</evidence>
<gene>
    <name evidence="1" type="primary">rppH</name>
    <name evidence="1" type="synonym">nudH</name>
    <name type="ordered locus">Acry_0901</name>
</gene>
<reference key="1">
    <citation type="submission" date="2007-05" db="EMBL/GenBank/DDBJ databases">
        <title>Complete sequence of chromosome of Acidiphilium cryptum JF-5.</title>
        <authorList>
            <consortium name="US DOE Joint Genome Institute"/>
            <person name="Copeland A."/>
            <person name="Lucas S."/>
            <person name="Lapidus A."/>
            <person name="Barry K."/>
            <person name="Detter J.C."/>
            <person name="Glavina del Rio T."/>
            <person name="Hammon N."/>
            <person name="Israni S."/>
            <person name="Dalin E."/>
            <person name="Tice H."/>
            <person name="Pitluck S."/>
            <person name="Sims D."/>
            <person name="Brettin T."/>
            <person name="Bruce D."/>
            <person name="Han C."/>
            <person name="Schmutz J."/>
            <person name="Larimer F."/>
            <person name="Land M."/>
            <person name="Hauser L."/>
            <person name="Kyrpides N."/>
            <person name="Kim E."/>
            <person name="Magnuson T."/>
            <person name="Richardson P."/>
        </authorList>
    </citation>
    <scope>NUCLEOTIDE SEQUENCE [LARGE SCALE GENOMIC DNA]</scope>
    <source>
        <strain>JF-5</strain>
    </source>
</reference>
<proteinExistence type="inferred from homology"/>
<feature type="chain" id="PRO_1000021921" description="RNA pyrophosphohydrolase">
    <location>
        <begin position="1"/>
        <end position="164"/>
    </location>
</feature>
<feature type="domain" description="Nudix hydrolase" evidence="1">
    <location>
        <begin position="8"/>
        <end position="153"/>
    </location>
</feature>
<feature type="short sequence motif" description="Nudix box">
    <location>
        <begin position="45"/>
        <end position="66"/>
    </location>
</feature>
<comment type="function">
    <text evidence="1">Accelerates the degradation of transcripts by removing pyrophosphate from the 5'-end of triphosphorylated RNA, leading to a more labile monophosphorylated state that can stimulate subsequent ribonuclease cleavage.</text>
</comment>
<comment type="cofactor">
    <cofactor evidence="1">
        <name>a divalent metal cation</name>
        <dbReference type="ChEBI" id="CHEBI:60240"/>
    </cofactor>
</comment>
<comment type="similarity">
    <text evidence="1">Belongs to the Nudix hydrolase family. RppH subfamily.</text>
</comment>
<name>RPPH_ACICJ</name>
<sequence length="164" mass="18354">MTGATALPYRSNVGAALFSRAGKILVARRADLGPDAAYQWQLPQGGIDGDEDPAAAVLRELDEEIGTTAVELLGEIPEWLSYDFPPDVVAKFGARHRGQRQRWFALRFLGTDDMIRLDAHAHPEFDEWRWTELSSIPALAVPFKRPIYERLARDFARFAKTDGA</sequence>
<dbReference type="EC" id="3.6.1.-" evidence="1"/>
<dbReference type="EMBL" id="CP000697">
    <property type="protein sequence ID" value="ABQ30120.1"/>
    <property type="molecule type" value="Genomic_DNA"/>
</dbReference>
<dbReference type="RefSeq" id="WP_007424438.1">
    <property type="nucleotide sequence ID" value="NC_009484.1"/>
</dbReference>
<dbReference type="SMR" id="A5FWY8"/>
<dbReference type="STRING" id="349163.Acry_0901"/>
<dbReference type="KEGG" id="acr:Acry_0901"/>
<dbReference type="eggNOG" id="COG0494">
    <property type="taxonomic scope" value="Bacteria"/>
</dbReference>
<dbReference type="HOGENOM" id="CLU_087195_3_0_5"/>
<dbReference type="Proteomes" id="UP000000245">
    <property type="component" value="Chromosome"/>
</dbReference>
<dbReference type="GO" id="GO:0034432">
    <property type="term" value="F:bis(5'-adenosyl)-pentaphosphatase activity"/>
    <property type="evidence" value="ECO:0007669"/>
    <property type="project" value="TreeGrafter"/>
</dbReference>
<dbReference type="GO" id="GO:0008893">
    <property type="term" value="F:guanosine-3',5'-bis(diphosphate) 3'-diphosphatase activity"/>
    <property type="evidence" value="ECO:0007669"/>
    <property type="project" value="TreeGrafter"/>
</dbReference>
<dbReference type="GO" id="GO:0006753">
    <property type="term" value="P:nucleoside phosphate metabolic process"/>
    <property type="evidence" value="ECO:0007669"/>
    <property type="project" value="TreeGrafter"/>
</dbReference>
<dbReference type="GO" id="GO:0019693">
    <property type="term" value="P:ribose phosphate metabolic process"/>
    <property type="evidence" value="ECO:0007669"/>
    <property type="project" value="TreeGrafter"/>
</dbReference>
<dbReference type="CDD" id="cd03671">
    <property type="entry name" value="NUDIX_Ap4A_hydrolase_plant_like"/>
    <property type="match status" value="1"/>
</dbReference>
<dbReference type="Gene3D" id="3.90.79.10">
    <property type="entry name" value="Nucleoside Triphosphate Pyrophosphohydrolase"/>
    <property type="match status" value="1"/>
</dbReference>
<dbReference type="HAMAP" id="MF_00298">
    <property type="entry name" value="Nudix_RppH"/>
    <property type="match status" value="1"/>
</dbReference>
<dbReference type="InterPro" id="IPR015797">
    <property type="entry name" value="NUDIX_hydrolase-like_dom_sf"/>
</dbReference>
<dbReference type="InterPro" id="IPR020084">
    <property type="entry name" value="NUDIX_hydrolase_CS"/>
</dbReference>
<dbReference type="InterPro" id="IPR000086">
    <property type="entry name" value="NUDIX_hydrolase_dom"/>
</dbReference>
<dbReference type="InterPro" id="IPR022927">
    <property type="entry name" value="RppH"/>
</dbReference>
<dbReference type="NCBIfam" id="NF001936">
    <property type="entry name" value="PRK00714.1-3"/>
    <property type="match status" value="1"/>
</dbReference>
<dbReference type="NCBIfam" id="NF001938">
    <property type="entry name" value="PRK00714.1-5"/>
    <property type="match status" value="1"/>
</dbReference>
<dbReference type="PANTHER" id="PTHR11839:SF22">
    <property type="entry name" value="NUDIX HYDROLASE 26, CHLOROPLASTIC"/>
    <property type="match status" value="1"/>
</dbReference>
<dbReference type="PANTHER" id="PTHR11839">
    <property type="entry name" value="UDP/ADP-SUGAR PYROPHOSPHATASE"/>
    <property type="match status" value="1"/>
</dbReference>
<dbReference type="Pfam" id="PF00293">
    <property type="entry name" value="NUDIX"/>
    <property type="match status" value="1"/>
</dbReference>
<dbReference type="SUPFAM" id="SSF55811">
    <property type="entry name" value="Nudix"/>
    <property type="match status" value="1"/>
</dbReference>
<dbReference type="PROSITE" id="PS51462">
    <property type="entry name" value="NUDIX"/>
    <property type="match status" value="1"/>
</dbReference>
<dbReference type="PROSITE" id="PS00893">
    <property type="entry name" value="NUDIX_BOX"/>
    <property type="match status" value="1"/>
</dbReference>
<protein>
    <recommendedName>
        <fullName evidence="1">RNA pyrophosphohydrolase</fullName>
        <ecNumber evidence="1">3.6.1.-</ecNumber>
    </recommendedName>
    <alternativeName>
        <fullName evidence="1">(Di)nucleoside polyphosphate hydrolase</fullName>
    </alternativeName>
</protein>
<accession>A5FWY8</accession>
<organism>
    <name type="scientific">Acidiphilium cryptum (strain JF-5)</name>
    <dbReference type="NCBI Taxonomy" id="349163"/>
    <lineage>
        <taxon>Bacteria</taxon>
        <taxon>Pseudomonadati</taxon>
        <taxon>Pseudomonadota</taxon>
        <taxon>Alphaproteobacteria</taxon>
        <taxon>Acetobacterales</taxon>
        <taxon>Acidocellaceae</taxon>
        <taxon>Acidiphilium</taxon>
    </lineage>
</organism>